<comment type="function">
    <text evidence="1">Catalyzes the oxidation of either pyridoxine 5'-phosphate (PNP) or pyridoxamine 5'-phosphate (PMP) into pyridoxal 5'-phosphate (PLP).</text>
</comment>
<comment type="catalytic activity">
    <reaction evidence="1">
        <text>pyridoxamine 5'-phosphate + O2 + H2O = pyridoxal 5'-phosphate + H2O2 + NH4(+)</text>
        <dbReference type="Rhea" id="RHEA:15817"/>
        <dbReference type="ChEBI" id="CHEBI:15377"/>
        <dbReference type="ChEBI" id="CHEBI:15379"/>
        <dbReference type="ChEBI" id="CHEBI:16240"/>
        <dbReference type="ChEBI" id="CHEBI:28938"/>
        <dbReference type="ChEBI" id="CHEBI:58451"/>
        <dbReference type="ChEBI" id="CHEBI:597326"/>
        <dbReference type="EC" id="1.4.3.5"/>
    </reaction>
</comment>
<comment type="catalytic activity">
    <reaction evidence="1">
        <text>pyridoxine 5'-phosphate + O2 = pyridoxal 5'-phosphate + H2O2</text>
        <dbReference type="Rhea" id="RHEA:15149"/>
        <dbReference type="ChEBI" id="CHEBI:15379"/>
        <dbReference type="ChEBI" id="CHEBI:16240"/>
        <dbReference type="ChEBI" id="CHEBI:58589"/>
        <dbReference type="ChEBI" id="CHEBI:597326"/>
        <dbReference type="EC" id="1.4.3.5"/>
    </reaction>
</comment>
<comment type="cofactor">
    <cofactor evidence="1">
        <name>FMN</name>
        <dbReference type="ChEBI" id="CHEBI:58210"/>
    </cofactor>
    <text evidence="1">Binds 1 FMN per subunit.</text>
</comment>
<comment type="pathway">
    <text evidence="1">Cofactor metabolism; pyridoxal 5'-phosphate salvage; pyridoxal 5'-phosphate from pyridoxamine 5'-phosphate: step 1/1.</text>
</comment>
<comment type="pathway">
    <text evidence="1">Cofactor metabolism; pyridoxal 5'-phosphate salvage; pyridoxal 5'-phosphate from pyridoxine 5'-phosphate: step 1/1.</text>
</comment>
<comment type="subunit">
    <text evidence="1">Homodimer.</text>
</comment>
<comment type="similarity">
    <text evidence="1">Belongs to the pyridoxamine 5'-phosphate oxidase family.</text>
</comment>
<comment type="sequence caution" evidence="2">
    <conflict type="erroneous initiation">
        <sequence resource="EMBL-CDS" id="ABD09473"/>
    </conflict>
</comment>
<accession>Q2JGW9</accession>
<dbReference type="EC" id="1.4.3.5" evidence="1"/>
<dbReference type="EMBL" id="CP000249">
    <property type="protein sequence ID" value="ABD09473.1"/>
    <property type="status" value="ALT_INIT"/>
    <property type="molecule type" value="Genomic_DNA"/>
</dbReference>
<dbReference type="RefSeq" id="WP_035729252.1">
    <property type="nucleotide sequence ID" value="NZ_MSEA01000284.1"/>
</dbReference>
<dbReference type="SMR" id="Q2JGW9"/>
<dbReference type="STRING" id="106370.Francci3_0079"/>
<dbReference type="KEGG" id="fra:Francci3_0079"/>
<dbReference type="eggNOG" id="COG0259">
    <property type="taxonomic scope" value="Bacteria"/>
</dbReference>
<dbReference type="HOGENOM" id="CLU_032263_2_1_11"/>
<dbReference type="PhylomeDB" id="Q2JGW9"/>
<dbReference type="UniPathway" id="UPA01068">
    <property type="reaction ID" value="UER00304"/>
</dbReference>
<dbReference type="UniPathway" id="UPA01068">
    <property type="reaction ID" value="UER00305"/>
</dbReference>
<dbReference type="Proteomes" id="UP000001937">
    <property type="component" value="Chromosome"/>
</dbReference>
<dbReference type="GO" id="GO:0010181">
    <property type="term" value="F:FMN binding"/>
    <property type="evidence" value="ECO:0007669"/>
    <property type="project" value="UniProtKB-UniRule"/>
</dbReference>
<dbReference type="GO" id="GO:0004733">
    <property type="term" value="F:pyridoxamine phosphate oxidase activity"/>
    <property type="evidence" value="ECO:0007669"/>
    <property type="project" value="UniProtKB-UniRule"/>
</dbReference>
<dbReference type="GO" id="GO:0008615">
    <property type="term" value="P:pyridoxine biosynthetic process"/>
    <property type="evidence" value="ECO:0007669"/>
    <property type="project" value="UniProtKB-KW"/>
</dbReference>
<dbReference type="FunFam" id="2.30.110.10:FF:000020">
    <property type="entry name" value="PNPO isoform 11"/>
    <property type="match status" value="1"/>
</dbReference>
<dbReference type="Gene3D" id="2.30.110.10">
    <property type="entry name" value="Electron Transport, Fmn-binding Protein, Chain A"/>
    <property type="match status" value="1"/>
</dbReference>
<dbReference type="HAMAP" id="MF_01629">
    <property type="entry name" value="PdxH"/>
    <property type="match status" value="1"/>
</dbReference>
<dbReference type="InterPro" id="IPR000659">
    <property type="entry name" value="Pyridox_Oxase"/>
</dbReference>
<dbReference type="InterPro" id="IPR019740">
    <property type="entry name" value="Pyridox_Oxase_CS"/>
</dbReference>
<dbReference type="InterPro" id="IPR011576">
    <property type="entry name" value="Pyridox_Oxase_N"/>
</dbReference>
<dbReference type="InterPro" id="IPR019576">
    <property type="entry name" value="Pyridoxamine_oxidase_dimer_C"/>
</dbReference>
<dbReference type="InterPro" id="IPR012349">
    <property type="entry name" value="Split_barrel_FMN-bd"/>
</dbReference>
<dbReference type="NCBIfam" id="TIGR00558">
    <property type="entry name" value="pdxH"/>
    <property type="match status" value="1"/>
</dbReference>
<dbReference type="NCBIfam" id="NF004231">
    <property type="entry name" value="PRK05679.1"/>
    <property type="match status" value="1"/>
</dbReference>
<dbReference type="PANTHER" id="PTHR10851:SF0">
    <property type="entry name" value="PYRIDOXINE-5'-PHOSPHATE OXIDASE"/>
    <property type="match status" value="1"/>
</dbReference>
<dbReference type="PANTHER" id="PTHR10851">
    <property type="entry name" value="PYRIDOXINE-5-PHOSPHATE OXIDASE"/>
    <property type="match status" value="1"/>
</dbReference>
<dbReference type="Pfam" id="PF10590">
    <property type="entry name" value="PNP_phzG_C"/>
    <property type="match status" value="1"/>
</dbReference>
<dbReference type="Pfam" id="PF01243">
    <property type="entry name" value="PNPOx_N"/>
    <property type="match status" value="1"/>
</dbReference>
<dbReference type="SUPFAM" id="SSF50475">
    <property type="entry name" value="FMN-binding split barrel"/>
    <property type="match status" value="1"/>
</dbReference>
<dbReference type="PROSITE" id="PS01064">
    <property type="entry name" value="PYRIDOX_OXIDASE"/>
    <property type="match status" value="1"/>
</dbReference>
<proteinExistence type="inferred from homology"/>
<protein>
    <recommendedName>
        <fullName evidence="1">Pyridoxine/pyridoxamine 5'-phosphate oxidase</fullName>
        <ecNumber evidence="1">1.4.3.5</ecNumber>
    </recommendedName>
    <alternativeName>
        <fullName evidence="1">PNP/PMP oxidase</fullName>
        <shortName evidence="1">PNPOx</shortName>
    </alternativeName>
    <alternativeName>
        <fullName evidence="1">Pyridoxal 5'-phosphate synthase</fullName>
    </alternativeName>
</protein>
<organism>
    <name type="scientific">Frankia casuarinae (strain DSM 45818 / CECT 9043 / HFP020203 / CcI3)</name>
    <dbReference type="NCBI Taxonomy" id="106370"/>
    <lineage>
        <taxon>Bacteria</taxon>
        <taxon>Bacillati</taxon>
        <taxon>Actinomycetota</taxon>
        <taxon>Actinomycetes</taxon>
        <taxon>Frankiales</taxon>
        <taxon>Frankiaceae</taxon>
        <taxon>Frankia</taxon>
    </lineage>
</organism>
<name>PDXH_FRACC</name>
<sequence length="267" mass="28842">MGGPDPDVPDLDVPDPALLRQGYRAGRLEPEHLAPTWVEQFAAWFIDAATPGVGVPEANAAVFATASAAGRPSARTVLLKGFDQRGFVIYTNYASRKGREATENPFGSLVFPWYALERQVVVIGSIERVSRAETERYFQSRPHGSQLGAWASHQSTIIESRTVLDDRAAELAARWPEGTRVPTPEFWGGLRIVPDTVEFWQGRADRLHDRLRYRRVSVPADGGGTDSLAVADPDATGVRVGDAGGGDAGGGVPTAAEDLWVVERLAP</sequence>
<feature type="chain" id="PRO_0000255868" description="Pyridoxine/pyridoxamine 5'-phosphate oxidase">
    <location>
        <begin position="1"/>
        <end position="267"/>
    </location>
</feature>
<feature type="binding site" evidence="1">
    <location>
        <begin position="20"/>
        <end position="23"/>
    </location>
    <ligand>
        <name>substrate</name>
    </ligand>
</feature>
<feature type="binding site" evidence="1">
    <location>
        <begin position="75"/>
        <end position="80"/>
    </location>
    <ligand>
        <name>FMN</name>
        <dbReference type="ChEBI" id="CHEBI:58210"/>
    </ligand>
</feature>
<feature type="binding site" evidence="1">
    <location>
        <position position="80"/>
    </location>
    <ligand>
        <name>substrate</name>
    </ligand>
</feature>
<feature type="binding site" evidence="1">
    <location>
        <begin position="90"/>
        <end position="91"/>
    </location>
    <ligand>
        <name>FMN</name>
        <dbReference type="ChEBI" id="CHEBI:58210"/>
    </ligand>
</feature>
<feature type="binding site" evidence="1">
    <location>
        <position position="96"/>
    </location>
    <ligand>
        <name>FMN</name>
        <dbReference type="ChEBI" id="CHEBI:58210"/>
    </ligand>
</feature>
<feature type="binding site" evidence="1">
    <location>
        <position position="97"/>
    </location>
    <ligand>
        <name>FMN</name>
        <dbReference type="ChEBI" id="CHEBI:58210"/>
    </ligand>
</feature>
<feature type="binding site" evidence="1">
    <location>
        <position position="119"/>
    </location>
    <ligand>
        <name>FMN</name>
        <dbReference type="ChEBI" id="CHEBI:58210"/>
    </ligand>
</feature>
<feature type="binding site" evidence="1">
    <location>
        <position position="137"/>
    </location>
    <ligand>
        <name>substrate</name>
    </ligand>
</feature>
<feature type="binding site" evidence="1">
    <location>
        <position position="141"/>
    </location>
    <ligand>
        <name>substrate</name>
    </ligand>
</feature>
<feature type="binding site" evidence="1">
    <location>
        <position position="145"/>
    </location>
    <ligand>
        <name>substrate</name>
    </ligand>
</feature>
<feature type="binding site" evidence="1">
    <location>
        <begin position="154"/>
        <end position="155"/>
    </location>
    <ligand>
        <name>FMN</name>
        <dbReference type="ChEBI" id="CHEBI:58210"/>
    </ligand>
</feature>
<feature type="binding site" evidence="1">
    <location>
        <position position="200"/>
    </location>
    <ligand>
        <name>FMN</name>
        <dbReference type="ChEBI" id="CHEBI:58210"/>
    </ligand>
</feature>
<feature type="binding site" evidence="1">
    <location>
        <begin position="206"/>
        <end position="208"/>
    </location>
    <ligand>
        <name>substrate</name>
    </ligand>
</feature>
<feature type="binding site" evidence="1">
    <location>
        <position position="210"/>
    </location>
    <ligand>
        <name>FMN</name>
        <dbReference type="ChEBI" id="CHEBI:58210"/>
    </ligand>
</feature>
<keyword id="KW-0285">Flavoprotein</keyword>
<keyword id="KW-0288">FMN</keyword>
<keyword id="KW-0560">Oxidoreductase</keyword>
<keyword id="KW-0664">Pyridoxine biosynthesis</keyword>
<keyword id="KW-1185">Reference proteome</keyword>
<gene>
    <name evidence="1" type="primary">pdxH</name>
    <name type="ordered locus">Francci3_0079</name>
</gene>
<evidence type="ECO:0000255" key="1">
    <source>
        <dbReference type="HAMAP-Rule" id="MF_01629"/>
    </source>
</evidence>
<evidence type="ECO:0000305" key="2"/>
<reference key="1">
    <citation type="journal article" date="2007" name="Genome Res.">
        <title>Genome characteristics of facultatively symbiotic Frankia sp. strains reflect host range and host plant biogeography.</title>
        <authorList>
            <person name="Normand P."/>
            <person name="Lapierre P."/>
            <person name="Tisa L.S."/>
            <person name="Gogarten J.P."/>
            <person name="Alloisio N."/>
            <person name="Bagnarol E."/>
            <person name="Bassi C.A."/>
            <person name="Berry A.M."/>
            <person name="Bickhart D.M."/>
            <person name="Choisne N."/>
            <person name="Couloux A."/>
            <person name="Cournoyer B."/>
            <person name="Cruveiller S."/>
            <person name="Daubin V."/>
            <person name="Demange N."/>
            <person name="Francino M.P."/>
            <person name="Goltsman E."/>
            <person name="Huang Y."/>
            <person name="Kopp O.R."/>
            <person name="Labarre L."/>
            <person name="Lapidus A."/>
            <person name="Lavire C."/>
            <person name="Marechal J."/>
            <person name="Martinez M."/>
            <person name="Mastronunzio J.E."/>
            <person name="Mullin B.C."/>
            <person name="Niemann J."/>
            <person name="Pujic P."/>
            <person name="Rawnsley T."/>
            <person name="Rouy Z."/>
            <person name="Schenowitz C."/>
            <person name="Sellstedt A."/>
            <person name="Tavares F."/>
            <person name="Tomkins J.P."/>
            <person name="Vallenet D."/>
            <person name="Valverde C."/>
            <person name="Wall L.G."/>
            <person name="Wang Y."/>
            <person name="Medigue C."/>
            <person name="Benson D.R."/>
        </authorList>
    </citation>
    <scope>NUCLEOTIDE SEQUENCE [LARGE SCALE GENOMIC DNA]</scope>
    <source>
        <strain>DSM 45818 / CECT 9043 / HFP020203 / CcI3</strain>
    </source>
</reference>